<gene>
    <name evidence="1" type="primary">fosB1</name>
    <name type="synonym">fosB-1</name>
    <name type="ordered locus">BA_2042</name>
    <name type="ordered locus">GBAA_2042</name>
    <name type="ordered locus">BAS1895</name>
</gene>
<evidence type="ECO:0000255" key="1">
    <source>
        <dbReference type="HAMAP-Rule" id="MF_01512"/>
    </source>
</evidence>
<evidence type="ECO:0000255" key="2">
    <source>
        <dbReference type="PROSITE-ProRule" id="PRU01163"/>
    </source>
</evidence>
<reference key="1">
    <citation type="journal article" date="2003" name="Nature">
        <title>The genome sequence of Bacillus anthracis Ames and comparison to closely related bacteria.</title>
        <authorList>
            <person name="Read T.D."/>
            <person name="Peterson S.N."/>
            <person name="Tourasse N.J."/>
            <person name="Baillie L.W."/>
            <person name="Paulsen I.T."/>
            <person name="Nelson K.E."/>
            <person name="Tettelin H."/>
            <person name="Fouts D.E."/>
            <person name="Eisen J.A."/>
            <person name="Gill S.R."/>
            <person name="Holtzapple E.K."/>
            <person name="Okstad O.A."/>
            <person name="Helgason E."/>
            <person name="Rilstone J."/>
            <person name="Wu M."/>
            <person name="Kolonay J.F."/>
            <person name="Beanan M.J."/>
            <person name="Dodson R.J."/>
            <person name="Brinkac L.M."/>
            <person name="Gwinn M.L."/>
            <person name="DeBoy R.T."/>
            <person name="Madpu R."/>
            <person name="Daugherty S.C."/>
            <person name="Durkin A.S."/>
            <person name="Haft D.H."/>
            <person name="Nelson W.C."/>
            <person name="Peterson J.D."/>
            <person name="Pop M."/>
            <person name="Khouri H.M."/>
            <person name="Radune D."/>
            <person name="Benton J.L."/>
            <person name="Mahamoud Y."/>
            <person name="Jiang L."/>
            <person name="Hance I.R."/>
            <person name="Weidman J.F."/>
            <person name="Berry K.J."/>
            <person name="Plaut R.D."/>
            <person name="Wolf A.M."/>
            <person name="Watkins K.L."/>
            <person name="Nierman W.C."/>
            <person name="Hazen A."/>
            <person name="Cline R.T."/>
            <person name="Redmond C."/>
            <person name="Thwaite J.E."/>
            <person name="White O."/>
            <person name="Salzberg S.L."/>
            <person name="Thomason B."/>
            <person name="Friedlander A.M."/>
            <person name="Koehler T.M."/>
            <person name="Hanna P.C."/>
            <person name="Kolstoe A.-B."/>
            <person name="Fraser C.M."/>
        </authorList>
    </citation>
    <scope>NUCLEOTIDE SEQUENCE [LARGE SCALE GENOMIC DNA]</scope>
    <source>
        <strain>Ames / isolate Porton</strain>
    </source>
</reference>
<reference key="2">
    <citation type="journal article" date="2009" name="J. Bacteriol.">
        <title>The complete genome sequence of Bacillus anthracis Ames 'Ancestor'.</title>
        <authorList>
            <person name="Ravel J."/>
            <person name="Jiang L."/>
            <person name="Stanley S.T."/>
            <person name="Wilson M.R."/>
            <person name="Decker R.S."/>
            <person name="Read T.D."/>
            <person name="Worsham P."/>
            <person name="Keim P.S."/>
            <person name="Salzberg S.L."/>
            <person name="Fraser-Liggett C.M."/>
            <person name="Rasko D.A."/>
        </authorList>
    </citation>
    <scope>NUCLEOTIDE SEQUENCE [LARGE SCALE GENOMIC DNA]</scope>
    <source>
        <strain>Ames ancestor</strain>
    </source>
</reference>
<reference key="3">
    <citation type="submission" date="2004-01" db="EMBL/GenBank/DDBJ databases">
        <title>Complete genome sequence of Bacillus anthracis Sterne.</title>
        <authorList>
            <person name="Brettin T.S."/>
            <person name="Bruce D."/>
            <person name="Challacombe J.F."/>
            <person name="Gilna P."/>
            <person name="Han C."/>
            <person name="Hill K."/>
            <person name="Hitchcock P."/>
            <person name="Jackson P."/>
            <person name="Keim P."/>
            <person name="Longmire J."/>
            <person name="Lucas S."/>
            <person name="Okinaka R."/>
            <person name="Richardson P."/>
            <person name="Rubin E."/>
            <person name="Tice H."/>
        </authorList>
    </citation>
    <scope>NUCLEOTIDE SEQUENCE [LARGE SCALE GENOMIC DNA]</scope>
    <source>
        <strain>Sterne</strain>
    </source>
</reference>
<comment type="function">
    <text evidence="1">Metallothiol transferase which confers resistance to fosfomycin by catalyzing the addition of a thiol cofactor to fosfomycin. L-cysteine is probably the physiological thiol donor.</text>
</comment>
<comment type="cofactor">
    <cofactor evidence="1">
        <name>Mg(2+)</name>
        <dbReference type="ChEBI" id="CHEBI:18420"/>
    </cofactor>
</comment>
<comment type="subunit">
    <text evidence="1">Homodimer.</text>
</comment>
<comment type="subcellular location">
    <subcellularLocation>
        <location evidence="1">Cytoplasm</location>
    </subcellularLocation>
</comment>
<comment type="similarity">
    <text evidence="1">Belongs to the fosfomycin resistance protein family. FosB subfamily.</text>
</comment>
<accession>Q81RK2</accession>
<accession>Q6HZS9</accession>
<accession>Q6KTR4</accession>
<protein>
    <recommendedName>
        <fullName evidence="1">Metallothiol transferase FosB 1</fullName>
        <ecNumber evidence="1">2.5.1.-</ecNumber>
    </recommendedName>
    <alternativeName>
        <fullName evidence="1">Fosfomycin resistance protein 1</fullName>
    </alternativeName>
</protein>
<sequence>MLKGINHLCFSVSNLEDSITFYEKVLEGELLVRGRKLAYFNICGVWIALNEEIHIPRKEIHQSYTHIAFSVEQKDFERLLQRLEENDVHILQGRERDVRDCESIYFVDPDGHKFEFHSGTLQERLNYYREDKPHMTFY</sequence>
<organism>
    <name type="scientific">Bacillus anthracis</name>
    <dbReference type="NCBI Taxonomy" id="1392"/>
    <lineage>
        <taxon>Bacteria</taxon>
        <taxon>Bacillati</taxon>
        <taxon>Bacillota</taxon>
        <taxon>Bacilli</taxon>
        <taxon>Bacillales</taxon>
        <taxon>Bacillaceae</taxon>
        <taxon>Bacillus</taxon>
        <taxon>Bacillus cereus group</taxon>
    </lineage>
</organism>
<dbReference type="EC" id="2.5.1.-" evidence="1"/>
<dbReference type="EMBL" id="AE016879">
    <property type="protein sequence ID" value="AAP25930.1"/>
    <property type="molecule type" value="Genomic_DNA"/>
</dbReference>
<dbReference type="EMBL" id="AE017334">
    <property type="protein sequence ID" value="AAT31156.1"/>
    <property type="molecule type" value="Genomic_DNA"/>
</dbReference>
<dbReference type="EMBL" id="AE017225">
    <property type="protein sequence ID" value="AAT54210.1"/>
    <property type="molecule type" value="Genomic_DNA"/>
</dbReference>
<dbReference type="RefSeq" id="NP_844444.1">
    <property type="nucleotide sequence ID" value="NC_003997.3"/>
</dbReference>
<dbReference type="RefSeq" id="YP_028159.1">
    <property type="nucleotide sequence ID" value="NC_005945.1"/>
</dbReference>
<dbReference type="SMR" id="Q81RK2"/>
<dbReference type="STRING" id="261594.GBAA_2042"/>
<dbReference type="DNASU" id="1085842"/>
<dbReference type="GeneID" id="45021958"/>
<dbReference type="KEGG" id="ban:BA_2042"/>
<dbReference type="KEGG" id="banh:HYU01_10220"/>
<dbReference type="KEGG" id="bar:GBAA_2042"/>
<dbReference type="KEGG" id="bat:BAS1895"/>
<dbReference type="PATRIC" id="fig|198094.11.peg.2014"/>
<dbReference type="eggNOG" id="COG0346">
    <property type="taxonomic scope" value="Bacteria"/>
</dbReference>
<dbReference type="HOGENOM" id="CLU_121356_0_0_9"/>
<dbReference type="OMA" id="RDEKPHM"/>
<dbReference type="OrthoDB" id="192739at2"/>
<dbReference type="Proteomes" id="UP000000427">
    <property type="component" value="Chromosome"/>
</dbReference>
<dbReference type="Proteomes" id="UP000000594">
    <property type="component" value="Chromosome"/>
</dbReference>
<dbReference type="GO" id="GO:0005737">
    <property type="term" value="C:cytoplasm"/>
    <property type="evidence" value="ECO:0007669"/>
    <property type="project" value="UniProtKB-SubCell"/>
</dbReference>
<dbReference type="GO" id="GO:0000287">
    <property type="term" value="F:magnesium ion binding"/>
    <property type="evidence" value="ECO:0007669"/>
    <property type="project" value="UniProtKB-UniRule"/>
</dbReference>
<dbReference type="GO" id="GO:0016765">
    <property type="term" value="F:transferase activity, transferring alkyl or aryl (other than methyl) groups"/>
    <property type="evidence" value="ECO:0007669"/>
    <property type="project" value="UniProtKB-UniRule"/>
</dbReference>
<dbReference type="GO" id="GO:0046677">
    <property type="term" value="P:response to antibiotic"/>
    <property type="evidence" value="ECO:0007669"/>
    <property type="project" value="UniProtKB-UniRule"/>
</dbReference>
<dbReference type="FunFam" id="3.10.180.10:FF:000015">
    <property type="entry name" value="Metallothiol transferase FosB"/>
    <property type="match status" value="1"/>
</dbReference>
<dbReference type="Gene3D" id="3.10.180.10">
    <property type="entry name" value="2,3-Dihydroxybiphenyl 1,2-Dioxygenase, domain 1"/>
    <property type="match status" value="1"/>
</dbReference>
<dbReference type="HAMAP" id="MF_01512">
    <property type="entry name" value="FosB"/>
    <property type="match status" value="1"/>
</dbReference>
<dbReference type="InterPro" id="IPR051332">
    <property type="entry name" value="Fosfomycin_Res_Enzymes"/>
</dbReference>
<dbReference type="InterPro" id="IPR029068">
    <property type="entry name" value="Glyas_Bleomycin-R_OHBP_Dase"/>
</dbReference>
<dbReference type="InterPro" id="IPR004360">
    <property type="entry name" value="Glyas_Fos-R_dOase_dom"/>
</dbReference>
<dbReference type="InterPro" id="IPR022858">
    <property type="entry name" value="Metallothiol_Trafse_FosB"/>
</dbReference>
<dbReference type="InterPro" id="IPR037523">
    <property type="entry name" value="VOC"/>
</dbReference>
<dbReference type="NCBIfam" id="NF000493">
    <property type="entry name" value="Fos_BSH"/>
    <property type="match status" value="1"/>
</dbReference>
<dbReference type="NCBIfam" id="NF041541">
    <property type="entry name" value="fosBx1_fam"/>
    <property type="match status" value="1"/>
</dbReference>
<dbReference type="NCBIfam" id="NF003152">
    <property type="entry name" value="PRK04101.1"/>
    <property type="match status" value="1"/>
</dbReference>
<dbReference type="PANTHER" id="PTHR36113:SF6">
    <property type="entry name" value="FOSFOMYCIN RESISTANCE PROTEIN FOSX"/>
    <property type="match status" value="1"/>
</dbReference>
<dbReference type="PANTHER" id="PTHR36113">
    <property type="entry name" value="LYASE, PUTATIVE-RELATED-RELATED"/>
    <property type="match status" value="1"/>
</dbReference>
<dbReference type="Pfam" id="PF00903">
    <property type="entry name" value="Glyoxalase"/>
    <property type="match status" value="1"/>
</dbReference>
<dbReference type="SUPFAM" id="SSF54593">
    <property type="entry name" value="Glyoxalase/Bleomycin resistance protein/Dihydroxybiphenyl dioxygenase"/>
    <property type="match status" value="1"/>
</dbReference>
<dbReference type="PROSITE" id="PS51819">
    <property type="entry name" value="VOC"/>
    <property type="match status" value="1"/>
</dbReference>
<name>FOSB1_BACAN</name>
<proteinExistence type="inferred from homology"/>
<keyword id="KW-0046">Antibiotic resistance</keyword>
<keyword id="KW-0963">Cytoplasm</keyword>
<keyword id="KW-0460">Magnesium</keyword>
<keyword id="KW-0479">Metal-binding</keyword>
<keyword id="KW-1185">Reference proteome</keyword>
<keyword id="KW-0808">Transferase</keyword>
<feature type="chain" id="PRO_0000164022" description="Metallothiol transferase FosB 1">
    <location>
        <begin position="1"/>
        <end position="138"/>
    </location>
</feature>
<feature type="domain" description="VOC" evidence="2">
    <location>
        <begin position="4"/>
        <end position="119"/>
    </location>
</feature>
<feature type="active site" description="Proton donor/acceptor" evidence="2">
    <location>
        <position position="115"/>
    </location>
</feature>
<feature type="binding site" evidence="1">
    <location>
        <position position="7"/>
    </location>
    <ligand>
        <name>Mg(2+)</name>
        <dbReference type="ChEBI" id="CHEBI:18420"/>
    </ligand>
</feature>
<feature type="binding site" evidence="1">
    <location>
        <position position="66"/>
    </location>
    <ligand>
        <name>Mg(2+)</name>
        <dbReference type="ChEBI" id="CHEBI:18420"/>
    </ligand>
</feature>
<feature type="binding site" evidence="1">
    <location>
        <position position="115"/>
    </location>
    <ligand>
        <name>Mg(2+)</name>
        <dbReference type="ChEBI" id="CHEBI:18420"/>
    </ligand>
</feature>